<evidence type="ECO:0000250" key="1"/>
<evidence type="ECO:0000250" key="2">
    <source>
        <dbReference type="UniProtKB" id="Q6AYK4"/>
    </source>
</evidence>
<evidence type="ECO:0000305" key="3"/>
<sequence>MCSTSVYDLEDIPLEDDDPNSIEFKILAFYARHHVFKNTPAVFSPKLSRTRSLSQKALGTWSTDSWTQVSLPCRGSPSSEKNISLGKKKSSWRTLFRVAEKEEGLPSSPKEIRAQGPQGPFPVERQSGFHNQHWPRSLSSVEQRLESEVVDSKVACIANRVAEIVYSWPPPDVIHSQGGSKLKERVSEILYFRFEGPCDSKNKDGEDQIISKIVELLKFSGDQLGREIKKDKALMSSFQDGLSYSTFKTITDLFLRDVDTRGESEVKARGFKAALAIDAIAKLTAIDNHPMNRMLGFGTKYLREYFSPWVQQNGGWEKILGISHEEVD</sequence>
<comment type="function">
    <text>Plays a role in apoptosis.</text>
</comment>
<comment type="interaction">
    <interactant intactId="EBI-8296066">
        <id>Q9CPT0</id>
    </interactant>
    <interactant intactId="EBI-309546">
        <id>P62862</id>
        <label>Fau</label>
    </interactant>
    <organismsDiffer>false</organismsDiffer>
    <experiments>4</experiments>
</comment>
<comment type="subcellular location">
    <subcellularLocation>
        <location evidence="1">Cytoplasm</location>
    </subcellularLocation>
</comment>
<comment type="PTM">
    <text evidence="1">Phosphorylated by MELK, leading to inhibit its pro-apoptotic function.</text>
</comment>
<comment type="similarity">
    <text evidence="3">Belongs to the Bcl-2 family.</text>
</comment>
<feature type="chain" id="PRO_0000143076" description="Apoptosis facilitator Bcl-2-like protein 14">
    <location>
        <begin position="1"/>
        <end position="328"/>
    </location>
</feature>
<feature type="short sequence motif" description="BH3">
    <location>
        <begin position="213"/>
        <end position="227"/>
    </location>
</feature>
<feature type="short sequence motif" description="BH2">
    <location>
        <begin position="309"/>
        <end position="316"/>
    </location>
</feature>
<feature type="modified residue" description="Phosphoserine" evidence="2">
    <location>
        <position position="44"/>
    </location>
</feature>
<feature type="sequence conflict" description="In Ref. 2; AAH25541." evidence="3" ref="2">
    <original>L</original>
    <variation>P</variation>
    <location>
        <position position="105"/>
    </location>
</feature>
<feature type="sequence conflict" description="In Ref. 1; BAB30545." evidence="3" ref="1">
    <original>C</original>
    <variation>F</variation>
    <location>
        <position position="156"/>
    </location>
</feature>
<feature type="sequence conflict" description="In Ref. 2; AAH25541." evidence="3" ref="2">
    <location>
        <position position="202"/>
    </location>
</feature>
<feature type="sequence conflict" description="In Ref. 2; AAH25541." evidence="3" ref="2">
    <original>R</original>
    <variation>Q</variation>
    <location>
        <position position="269"/>
    </location>
</feature>
<dbReference type="EMBL" id="AK008682">
    <property type="protein sequence ID" value="BAB25830.1"/>
    <property type="molecule type" value="mRNA"/>
</dbReference>
<dbReference type="EMBL" id="AK016670">
    <property type="protein sequence ID" value="BAB30370.1"/>
    <property type="molecule type" value="mRNA"/>
</dbReference>
<dbReference type="EMBL" id="AK016997">
    <property type="protein sequence ID" value="BAB30545.1"/>
    <property type="molecule type" value="mRNA"/>
</dbReference>
<dbReference type="EMBL" id="AK018579">
    <property type="protein sequence ID" value="BAB31290.1"/>
    <property type="molecule type" value="mRNA"/>
</dbReference>
<dbReference type="EMBL" id="AK160247">
    <property type="protein sequence ID" value="BAE35712.1"/>
    <property type="molecule type" value="mRNA"/>
</dbReference>
<dbReference type="EMBL" id="BC025541">
    <property type="protein sequence ID" value="AAH25541.1"/>
    <property type="molecule type" value="mRNA"/>
</dbReference>
<dbReference type="CCDS" id="CCDS20636.1"/>
<dbReference type="RefSeq" id="NP_001342615.1">
    <property type="nucleotide sequence ID" value="NM_001355686.1"/>
</dbReference>
<dbReference type="RefSeq" id="NP_080054.1">
    <property type="nucleotide sequence ID" value="NM_025778.3"/>
</dbReference>
<dbReference type="RefSeq" id="XP_006506547.1">
    <property type="nucleotide sequence ID" value="XM_006506484.3"/>
</dbReference>
<dbReference type="BioGRID" id="211735">
    <property type="interactions" value="1"/>
</dbReference>
<dbReference type="FunCoup" id="Q9CPT0">
    <property type="interactions" value="226"/>
</dbReference>
<dbReference type="IntAct" id="Q9CPT0">
    <property type="interactions" value="1"/>
</dbReference>
<dbReference type="MINT" id="Q9CPT0"/>
<dbReference type="STRING" id="10090.ENSMUSP00000032321"/>
<dbReference type="iPTMnet" id="Q9CPT0"/>
<dbReference type="PhosphoSitePlus" id="Q9CPT0"/>
<dbReference type="SwissPalm" id="Q9CPT0"/>
<dbReference type="PaxDb" id="10090-ENSMUSP00000107591"/>
<dbReference type="PeptideAtlas" id="Q9CPT0"/>
<dbReference type="ProteomicsDB" id="265186"/>
<dbReference type="Antibodypedia" id="11858">
    <property type="antibodies" value="295 antibodies from 35 providers"/>
</dbReference>
<dbReference type="Ensembl" id="ENSMUST00000032321.11">
    <property type="protein sequence ID" value="ENSMUSP00000032321.5"/>
    <property type="gene ID" value="ENSMUSG00000030200.14"/>
</dbReference>
<dbReference type="Ensembl" id="ENSMUST00000111960.2">
    <property type="protein sequence ID" value="ENSMUSP00000107591.2"/>
    <property type="gene ID" value="ENSMUSG00000030200.14"/>
</dbReference>
<dbReference type="Ensembl" id="ENSMUST00000163589.8">
    <property type="protein sequence ID" value="ENSMUSP00000132525.2"/>
    <property type="gene ID" value="ENSMUSG00000030200.14"/>
</dbReference>
<dbReference type="GeneID" id="66813"/>
<dbReference type="KEGG" id="mmu:66813"/>
<dbReference type="UCSC" id="uc009ekh.1">
    <property type="organism name" value="mouse"/>
</dbReference>
<dbReference type="AGR" id="MGI:1914063"/>
<dbReference type="CTD" id="79370"/>
<dbReference type="MGI" id="MGI:1914063">
    <property type="gene designation" value="Bcl2l14"/>
</dbReference>
<dbReference type="VEuPathDB" id="HostDB:ENSMUSG00000030200"/>
<dbReference type="eggNOG" id="KOG4728">
    <property type="taxonomic scope" value="Eukaryota"/>
</dbReference>
<dbReference type="GeneTree" id="ENSGT00940000154318"/>
<dbReference type="HOGENOM" id="CLU_073095_0_0_1"/>
<dbReference type="InParanoid" id="Q9CPT0"/>
<dbReference type="OMA" id="AMCTTSA"/>
<dbReference type="OrthoDB" id="9948726at2759"/>
<dbReference type="PhylomeDB" id="Q9CPT0"/>
<dbReference type="TreeFam" id="TF336214"/>
<dbReference type="BioGRID-ORCS" id="66813">
    <property type="hits" value="3 hits in 76 CRISPR screens"/>
</dbReference>
<dbReference type="PRO" id="PR:Q9CPT0"/>
<dbReference type="Proteomes" id="UP000000589">
    <property type="component" value="Chromosome 6"/>
</dbReference>
<dbReference type="RNAct" id="Q9CPT0">
    <property type="molecule type" value="protein"/>
</dbReference>
<dbReference type="Bgee" id="ENSMUSG00000030200">
    <property type="expression patterns" value="Expressed in seminiferous tubule of testis and 91 other cell types or tissues"/>
</dbReference>
<dbReference type="ExpressionAtlas" id="Q9CPT0">
    <property type="expression patterns" value="baseline and differential"/>
</dbReference>
<dbReference type="GO" id="GO:0005829">
    <property type="term" value="C:cytosol"/>
    <property type="evidence" value="ECO:0007669"/>
    <property type="project" value="Ensembl"/>
</dbReference>
<dbReference type="GO" id="GO:0043231">
    <property type="term" value="C:intracellular membrane-bounded organelle"/>
    <property type="evidence" value="ECO:0007669"/>
    <property type="project" value="Ensembl"/>
</dbReference>
<dbReference type="GO" id="GO:0019901">
    <property type="term" value="F:protein kinase binding"/>
    <property type="evidence" value="ECO:0007669"/>
    <property type="project" value="Ensembl"/>
</dbReference>
<dbReference type="GO" id="GO:0006915">
    <property type="term" value="P:apoptotic process"/>
    <property type="evidence" value="ECO:0007669"/>
    <property type="project" value="UniProtKB-KW"/>
</dbReference>
<dbReference type="GO" id="GO:0042981">
    <property type="term" value="P:regulation of apoptotic process"/>
    <property type="evidence" value="ECO:0007669"/>
    <property type="project" value="InterPro"/>
</dbReference>
<dbReference type="Gene3D" id="1.10.437.10">
    <property type="entry name" value="Blc2-like"/>
    <property type="match status" value="1"/>
</dbReference>
<dbReference type="InterPro" id="IPR036834">
    <property type="entry name" value="Bcl-2-like_sf"/>
</dbReference>
<dbReference type="InterPro" id="IPR002475">
    <property type="entry name" value="Bcl2-like"/>
</dbReference>
<dbReference type="PANTHER" id="PTHR14965:SF1">
    <property type="entry name" value="APOPTOSIS FACILITATOR BCL-2-LIKE PROTEIN 14"/>
    <property type="match status" value="1"/>
</dbReference>
<dbReference type="PANTHER" id="PTHR14965">
    <property type="entry name" value="SI:CH73-248E21.1"/>
    <property type="match status" value="1"/>
</dbReference>
<dbReference type="SUPFAM" id="SSF56854">
    <property type="entry name" value="Bcl-2 inhibitors of programmed cell death"/>
    <property type="match status" value="1"/>
</dbReference>
<dbReference type="PROSITE" id="PS50062">
    <property type="entry name" value="BCL2_FAMILY"/>
    <property type="match status" value="1"/>
</dbReference>
<protein>
    <recommendedName>
        <fullName>Apoptosis facilitator Bcl-2-like protein 14</fullName>
        <shortName>Bcl2-L-14</shortName>
    </recommendedName>
</protein>
<name>B2L14_MOUSE</name>
<accession>Q9CPT0</accession>
<accession>Q3TVA7</accession>
<accession>Q8R141</accession>
<accession>Q9D3W3</accession>
<keyword id="KW-0053">Apoptosis</keyword>
<keyword id="KW-0963">Cytoplasm</keyword>
<keyword id="KW-0597">Phosphoprotein</keyword>
<keyword id="KW-1185">Reference proteome</keyword>
<gene>
    <name type="primary">Bcl2l14</name>
</gene>
<organism>
    <name type="scientific">Mus musculus</name>
    <name type="common">Mouse</name>
    <dbReference type="NCBI Taxonomy" id="10090"/>
    <lineage>
        <taxon>Eukaryota</taxon>
        <taxon>Metazoa</taxon>
        <taxon>Chordata</taxon>
        <taxon>Craniata</taxon>
        <taxon>Vertebrata</taxon>
        <taxon>Euteleostomi</taxon>
        <taxon>Mammalia</taxon>
        <taxon>Eutheria</taxon>
        <taxon>Euarchontoglires</taxon>
        <taxon>Glires</taxon>
        <taxon>Rodentia</taxon>
        <taxon>Myomorpha</taxon>
        <taxon>Muroidea</taxon>
        <taxon>Muridae</taxon>
        <taxon>Murinae</taxon>
        <taxon>Mus</taxon>
        <taxon>Mus</taxon>
    </lineage>
</organism>
<reference key="1">
    <citation type="journal article" date="2005" name="Science">
        <title>The transcriptional landscape of the mammalian genome.</title>
        <authorList>
            <person name="Carninci P."/>
            <person name="Kasukawa T."/>
            <person name="Katayama S."/>
            <person name="Gough J."/>
            <person name="Frith M.C."/>
            <person name="Maeda N."/>
            <person name="Oyama R."/>
            <person name="Ravasi T."/>
            <person name="Lenhard B."/>
            <person name="Wells C."/>
            <person name="Kodzius R."/>
            <person name="Shimokawa K."/>
            <person name="Bajic V.B."/>
            <person name="Brenner S.E."/>
            <person name="Batalov S."/>
            <person name="Forrest A.R."/>
            <person name="Zavolan M."/>
            <person name="Davis M.J."/>
            <person name="Wilming L.G."/>
            <person name="Aidinis V."/>
            <person name="Allen J.E."/>
            <person name="Ambesi-Impiombato A."/>
            <person name="Apweiler R."/>
            <person name="Aturaliya R.N."/>
            <person name="Bailey T.L."/>
            <person name="Bansal M."/>
            <person name="Baxter L."/>
            <person name="Beisel K.W."/>
            <person name="Bersano T."/>
            <person name="Bono H."/>
            <person name="Chalk A.M."/>
            <person name="Chiu K.P."/>
            <person name="Choudhary V."/>
            <person name="Christoffels A."/>
            <person name="Clutterbuck D.R."/>
            <person name="Crowe M.L."/>
            <person name="Dalla E."/>
            <person name="Dalrymple B.P."/>
            <person name="de Bono B."/>
            <person name="Della Gatta G."/>
            <person name="di Bernardo D."/>
            <person name="Down T."/>
            <person name="Engstrom P."/>
            <person name="Fagiolini M."/>
            <person name="Faulkner G."/>
            <person name="Fletcher C.F."/>
            <person name="Fukushima T."/>
            <person name="Furuno M."/>
            <person name="Futaki S."/>
            <person name="Gariboldi M."/>
            <person name="Georgii-Hemming P."/>
            <person name="Gingeras T.R."/>
            <person name="Gojobori T."/>
            <person name="Green R.E."/>
            <person name="Gustincich S."/>
            <person name="Harbers M."/>
            <person name="Hayashi Y."/>
            <person name="Hensch T.K."/>
            <person name="Hirokawa N."/>
            <person name="Hill D."/>
            <person name="Huminiecki L."/>
            <person name="Iacono M."/>
            <person name="Ikeo K."/>
            <person name="Iwama A."/>
            <person name="Ishikawa T."/>
            <person name="Jakt M."/>
            <person name="Kanapin A."/>
            <person name="Katoh M."/>
            <person name="Kawasawa Y."/>
            <person name="Kelso J."/>
            <person name="Kitamura H."/>
            <person name="Kitano H."/>
            <person name="Kollias G."/>
            <person name="Krishnan S.P."/>
            <person name="Kruger A."/>
            <person name="Kummerfeld S.K."/>
            <person name="Kurochkin I.V."/>
            <person name="Lareau L.F."/>
            <person name="Lazarevic D."/>
            <person name="Lipovich L."/>
            <person name="Liu J."/>
            <person name="Liuni S."/>
            <person name="McWilliam S."/>
            <person name="Madan Babu M."/>
            <person name="Madera M."/>
            <person name="Marchionni L."/>
            <person name="Matsuda H."/>
            <person name="Matsuzawa S."/>
            <person name="Miki H."/>
            <person name="Mignone F."/>
            <person name="Miyake S."/>
            <person name="Morris K."/>
            <person name="Mottagui-Tabar S."/>
            <person name="Mulder N."/>
            <person name="Nakano N."/>
            <person name="Nakauchi H."/>
            <person name="Ng P."/>
            <person name="Nilsson R."/>
            <person name="Nishiguchi S."/>
            <person name="Nishikawa S."/>
            <person name="Nori F."/>
            <person name="Ohara O."/>
            <person name="Okazaki Y."/>
            <person name="Orlando V."/>
            <person name="Pang K.C."/>
            <person name="Pavan W.J."/>
            <person name="Pavesi G."/>
            <person name="Pesole G."/>
            <person name="Petrovsky N."/>
            <person name="Piazza S."/>
            <person name="Reed J."/>
            <person name="Reid J.F."/>
            <person name="Ring B.Z."/>
            <person name="Ringwald M."/>
            <person name="Rost B."/>
            <person name="Ruan Y."/>
            <person name="Salzberg S.L."/>
            <person name="Sandelin A."/>
            <person name="Schneider C."/>
            <person name="Schoenbach C."/>
            <person name="Sekiguchi K."/>
            <person name="Semple C.A."/>
            <person name="Seno S."/>
            <person name="Sessa L."/>
            <person name="Sheng Y."/>
            <person name="Shibata Y."/>
            <person name="Shimada H."/>
            <person name="Shimada K."/>
            <person name="Silva D."/>
            <person name="Sinclair B."/>
            <person name="Sperling S."/>
            <person name="Stupka E."/>
            <person name="Sugiura K."/>
            <person name="Sultana R."/>
            <person name="Takenaka Y."/>
            <person name="Taki K."/>
            <person name="Tammoja K."/>
            <person name="Tan S.L."/>
            <person name="Tang S."/>
            <person name="Taylor M.S."/>
            <person name="Tegner J."/>
            <person name="Teichmann S.A."/>
            <person name="Ueda H.R."/>
            <person name="van Nimwegen E."/>
            <person name="Verardo R."/>
            <person name="Wei C.L."/>
            <person name="Yagi K."/>
            <person name="Yamanishi H."/>
            <person name="Zabarovsky E."/>
            <person name="Zhu S."/>
            <person name="Zimmer A."/>
            <person name="Hide W."/>
            <person name="Bult C."/>
            <person name="Grimmond S.M."/>
            <person name="Teasdale R.D."/>
            <person name="Liu E.T."/>
            <person name="Brusic V."/>
            <person name="Quackenbush J."/>
            <person name="Wahlestedt C."/>
            <person name="Mattick J.S."/>
            <person name="Hume D.A."/>
            <person name="Kai C."/>
            <person name="Sasaki D."/>
            <person name="Tomaru Y."/>
            <person name="Fukuda S."/>
            <person name="Kanamori-Katayama M."/>
            <person name="Suzuki M."/>
            <person name="Aoki J."/>
            <person name="Arakawa T."/>
            <person name="Iida J."/>
            <person name="Imamura K."/>
            <person name="Itoh M."/>
            <person name="Kato T."/>
            <person name="Kawaji H."/>
            <person name="Kawagashira N."/>
            <person name="Kawashima T."/>
            <person name="Kojima M."/>
            <person name="Kondo S."/>
            <person name="Konno H."/>
            <person name="Nakano K."/>
            <person name="Ninomiya N."/>
            <person name="Nishio T."/>
            <person name="Okada M."/>
            <person name="Plessy C."/>
            <person name="Shibata K."/>
            <person name="Shiraki T."/>
            <person name="Suzuki S."/>
            <person name="Tagami M."/>
            <person name="Waki K."/>
            <person name="Watahiki A."/>
            <person name="Okamura-Oho Y."/>
            <person name="Suzuki H."/>
            <person name="Kawai J."/>
            <person name="Hayashizaki Y."/>
        </authorList>
    </citation>
    <scope>NUCLEOTIDE SEQUENCE [LARGE SCALE MRNA]</scope>
    <source>
        <strain>C57BL/6J</strain>
        <tissue>Colon</tissue>
        <tissue>Stomach</tissue>
        <tissue>Testis</tissue>
    </source>
</reference>
<reference key="2">
    <citation type="journal article" date="2004" name="Genome Res.">
        <title>The status, quality, and expansion of the NIH full-length cDNA project: the Mammalian Gene Collection (MGC).</title>
        <authorList>
            <consortium name="The MGC Project Team"/>
        </authorList>
    </citation>
    <scope>NUCLEOTIDE SEQUENCE [LARGE SCALE MRNA]</scope>
    <source>
        <strain>FVB/N</strain>
        <tissue>Mammary gland</tissue>
    </source>
</reference>
<proteinExistence type="evidence at protein level"/>